<protein>
    <recommendedName>
        <fullName evidence="1">TATA box-binding protein-like 1</fullName>
        <shortName evidence="8">TBP-like</shortName>
    </recommendedName>
    <alternativeName>
        <fullName evidence="6">TBP-like factor</fullName>
        <shortName evidence="7">CeTLF</shortName>
    </alternativeName>
</protein>
<keyword id="KW-0025">Alternative splicing</keyword>
<keyword id="KW-0238">DNA-binding</keyword>
<keyword id="KW-0539">Nucleus</keyword>
<keyword id="KW-1185">Reference proteome</keyword>
<keyword id="KW-0804">Transcription</keyword>
<keyword id="KW-0805">Transcription regulation</keyword>
<gene>
    <name evidence="13" type="primary">tlf-1</name>
    <name evidence="13" type="ORF">F39H11.2</name>
</gene>
<evidence type="ECO:0000250" key="1">
    <source>
        <dbReference type="UniProtKB" id="P62380"/>
    </source>
</evidence>
<evidence type="ECO:0000256" key="2">
    <source>
        <dbReference type="SAM" id="MobiDB-lite"/>
    </source>
</evidence>
<evidence type="ECO:0000269" key="3">
    <source>
    </source>
</evidence>
<evidence type="ECO:0000269" key="4">
    <source>
    </source>
</evidence>
<evidence type="ECO:0000269" key="5">
    <source>
    </source>
</evidence>
<evidence type="ECO:0000303" key="6">
    <source>
    </source>
</evidence>
<evidence type="ECO:0000303" key="7">
    <source>
    </source>
</evidence>
<evidence type="ECO:0000305" key="8"/>
<evidence type="ECO:0000312" key="9">
    <source>
        <dbReference type="EMBL" id="AAF59926.1"/>
    </source>
</evidence>
<evidence type="ECO:0000312" key="10">
    <source>
        <dbReference type="EMBL" id="CAB41469.1"/>
    </source>
</evidence>
<evidence type="ECO:0000312" key="11">
    <source>
        <dbReference type="Proteomes" id="UP000001940"/>
    </source>
</evidence>
<evidence type="ECO:0000312" key="12">
    <source>
        <dbReference type="WormBase" id="F39H11.2a"/>
    </source>
</evidence>
<evidence type="ECO:0000312" key="13">
    <source>
        <dbReference type="WormBase" id="F39H11.2b"/>
    </source>
</evidence>
<organism evidence="11">
    <name type="scientific">Caenorhabditis elegans</name>
    <dbReference type="NCBI Taxonomy" id="6239"/>
    <lineage>
        <taxon>Eukaryota</taxon>
        <taxon>Metazoa</taxon>
        <taxon>Ecdysozoa</taxon>
        <taxon>Nematoda</taxon>
        <taxon>Chromadorea</taxon>
        <taxon>Rhabditida</taxon>
        <taxon>Rhabditina</taxon>
        <taxon>Rhabditomorpha</taxon>
        <taxon>Rhabditoidea</taxon>
        <taxon>Rhabditidae</taxon>
        <taxon>Peloderinae</taxon>
        <taxon>Caenorhabditis</taxon>
    </lineage>
</organism>
<dbReference type="EMBL" id="AF228692">
    <property type="protein sequence ID" value="AAF59926.1"/>
    <property type="molecule type" value="mRNA"/>
</dbReference>
<dbReference type="EMBL" id="BX284601">
    <property type="protein sequence ID" value="CAB03082.2"/>
    <property type="molecule type" value="Genomic_DNA"/>
</dbReference>
<dbReference type="EMBL" id="BX284601">
    <property type="protein sequence ID" value="CAQ35044.1"/>
    <property type="molecule type" value="Genomic_DNA"/>
</dbReference>
<dbReference type="EMBL" id="AJ238443">
    <property type="protein sequence ID" value="CAB41469.1"/>
    <property type="molecule type" value="mRNA"/>
</dbReference>
<dbReference type="PIR" id="T22000">
    <property type="entry name" value="T22000"/>
</dbReference>
<dbReference type="RefSeq" id="NP_001122474.1">
    <molecule id="B2D6P4-1"/>
    <property type="nucleotide sequence ID" value="NM_001129002.4"/>
</dbReference>
<dbReference type="RefSeq" id="NP_492356.1">
    <molecule id="B2D6P4-2"/>
    <property type="nucleotide sequence ID" value="NM_059955.7"/>
</dbReference>
<dbReference type="SMR" id="B2D6P4"/>
<dbReference type="FunCoup" id="B2D6P4">
    <property type="interactions" value="353"/>
</dbReference>
<dbReference type="STRING" id="6239.F39H11.2b.1"/>
<dbReference type="PaxDb" id="6239-F39H11.2b"/>
<dbReference type="PeptideAtlas" id="B2D6P4"/>
<dbReference type="EnsemblMetazoa" id="F39H11.2a.1">
    <molecule id="B2D6P4-2"/>
    <property type="protein sequence ID" value="F39H11.2a.1"/>
    <property type="gene ID" value="WBGene00006577"/>
</dbReference>
<dbReference type="EnsemblMetazoa" id="F39H11.2b.1">
    <molecule id="B2D6P4-1"/>
    <property type="protein sequence ID" value="F39H11.2b.1"/>
    <property type="gene ID" value="WBGene00006577"/>
</dbReference>
<dbReference type="GeneID" id="172676"/>
<dbReference type="KEGG" id="cel:CELE_F39H11.2"/>
<dbReference type="UCSC" id="F39H11.2a">
    <molecule id="B2D6P4-1"/>
    <property type="organism name" value="c. elegans"/>
</dbReference>
<dbReference type="AGR" id="WB:WBGene00006577"/>
<dbReference type="CTD" id="172676"/>
<dbReference type="WormBase" id="F39H11.2a">
    <molecule id="B2D6P4-2"/>
    <property type="protein sequence ID" value="CE27159"/>
    <property type="gene ID" value="WBGene00006577"/>
    <property type="gene designation" value="tlf-1"/>
</dbReference>
<dbReference type="WormBase" id="F39H11.2b">
    <molecule id="B2D6P4-1"/>
    <property type="protein sequence ID" value="CE42480"/>
    <property type="gene ID" value="WBGene00006577"/>
    <property type="gene designation" value="tlf-1"/>
</dbReference>
<dbReference type="eggNOG" id="KOG3302">
    <property type="taxonomic scope" value="Eukaryota"/>
</dbReference>
<dbReference type="GeneTree" id="ENSGT00940000155712"/>
<dbReference type="HOGENOM" id="CLU_038511_0_0_1"/>
<dbReference type="InParanoid" id="B2D6P4"/>
<dbReference type="OMA" id="CYIKVYS"/>
<dbReference type="OrthoDB" id="2127950at2759"/>
<dbReference type="PRO" id="PR:B2D6P4"/>
<dbReference type="Proteomes" id="UP000001940">
    <property type="component" value="Chromosome I"/>
</dbReference>
<dbReference type="Bgee" id="WBGene00006577">
    <property type="expression patterns" value="Expressed in embryo and 4 other cell types or tissues"/>
</dbReference>
<dbReference type="ExpressionAtlas" id="B2D6P4">
    <property type="expression patterns" value="baseline and differential"/>
</dbReference>
<dbReference type="GO" id="GO:0000785">
    <property type="term" value="C:chromatin"/>
    <property type="evidence" value="ECO:0000314"/>
    <property type="project" value="UniProtKB"/>
</dbReference>
<dbReference type="GO" id="GO:0005634">
    <property type="term" value="C:nucleus"/>
    <property type="evidence" value="ECO:0000314"/>
    <property type="project" value="UniProtKB"/>
</dbReference>
<dbReference type="GO" id="GO:0003677">
    <property type="term" value="F:DNA binding"/>
    <property type="evidence" value="ECO:0007669"/>
    <property type="project" value="UniProtKB-KW"/>
</dbReference>
<dbReference type="GO" id="GO:0140223">
    <property type="term" value="F:general transcription initiation factor activity"/>
    <property type="evidence" value="ECO:0000318"/>
    <property type="project" value="GO_Central"/>
</dbReference>
<dbReference type="GO" id="GO:0006352">
    <property type="term" value="P:DNA-templated transcription initiation"/>
    <property type="evidence" value="ECO:0000318"/>
    <property type="project" value="GO_Central"/>
</dbReference>
<dbReference type="GO" id="GO:0009792">
    <property type="term" value="P:embryo development ending in birth or egg hatching"/>
    <property type="evidence" value="ECO:0000315"/>
    <property type="project" value="WormBase"/>
</dbReference>
<dbReference type="GO" id="GO:0000122">
    <property type="term" value="P:negative regulation of transcription by RNA polymerase II"/>
    <property type="evidence" value="ECO:0000315"/>
    <property type="project" value="WormBase"/>
</dbReference>
<dbReference type="GO" id="GO:0045944">
    <property type="term" value="P:positive regulation of transcription by RNA polymerase II"/>
    <property type="evidence" value="ECO:0000315"/>
    <property type="project" value="UniProtKB"/>
</dbReference>
<dbReference type="CDD" id="cd04517">
    <property type="entry name" value="TLF"/>
    <property type="match status" value="1"/>
</dbReference>
<dbReference type="FunFam" id="3.30.310.10:FF:000009">
    <property type="entry name" value="TatA box-binding protein-like protein 1"/>
    <property type="match status" value="1"/>
</dbReference>
<dbReference type="FunFam" id="3.30.310.10:FF:000027">
    <property type="entry name" value="TBP-like factor"/>
    <property type="match status" value="1"/>
</dbReference>
<dbReference type="Gene3D" id="3.30.310.10">
    <property type="entry name" value="TATA-Binding Protein"/>
    <property type="match status" value="2"/>
</dbReference>
<dbReference type="InterPro" id="IPR000814">
    <property type="entry name" value="TBP"/>
</dbReference>
<dbReference type="InterPro" id="IPR015445">
    <property type="entry name" value="TBP-like"/>
</dbReference>
<dbReference type="InterPro" id="IPR012295">
    <property type="entry name" value="TBP_dom_sf"/>
</dbReference>
<dbReference type="PANTHER" id="PTHR10126">
    <property type="entry name" value="TATA-BOX BINDING PROTEIN"/>
    <property type="match status" value="1"/>
</dbReference>
<dbReference type="Pfam" id="PF00352">
    <property type="entry name" value="TBP"/>
    <property type="match status" value="2"/>
</dbReference>
<dbReference type="PRINTS" id="PR00686">
    <property type="entry name" value="TIFACTORIID"/>
</dbReference>
<dbReference type="SUPFAM" id="SSF55945">
    <property type="entry name" value="TATA-box binding protein-like"/>
    <property type="match status" value="2"/>
</dbReference>
<proteinExistence type="evidence at protein level"/>
<comment type="function">
    <text evidence="3 4 5">May be a general transcription factor (PubMed:11030349, PubMed:11030350). Plays an essential role for RNA polymerase II/ama-1 transcription in early embryos whereby it activates a subset of RNA polymerase II promoters and facilitates the reestablishment of transcription after mitosis (PubMed:14726532).</text>
</comment>
<comment type="subcellular location">
    <subcellularLocation>
        <location evidence="3 4 5">Nucleus</location>
    </subcellularLocation>
</comment>
<comment type="alternative products">
    <event type="alternative splicing"/>
    <isoform>
        <id>B2D6P4-1</id>
        <name evidence="13">b</name>
        <sequence type="displayed"/>
    </isoform>
    <isoform>
        <id>B2D6P4-2</id>
        <name evidence="12">a</name>
        <sequence type="described" ref="VSP_060675"/>
    </isoform>
</comment>
<comment type="developmental stage">
    <text evidence="3 4">Widely expressed throughout embryogenesis, starting at the two-cell stage and probably expressed both maternally and zygotically (at protein level).</text>
</comment>
<comment type="disruption phenotype">
    <text evidence="3 4 5">RNAi-mediated knockdown causes early embryonic defects, including premature cell division of the Ea and Ep blastomeres, a failure to undergo gastrulation, and embryonic arrest (PubMed:11030349, PubMed:11030350). Knockdown causes severe loss of polymerase II large subunit ama-1 phosphorylation (PubMed:11030349, PubMed:11030350). Knockdown also causes a reduction in expression levels of several embryonic genes (PubMed:11030349, PubMed:11030350, PubMed:14726532).</text>
</comment>
<comment type="similarity">
    <text evidence="8">Belongs to the TBP family.</text>
</comment>
<accession>B2D6P4</accession>
<accession>G5EC52</accession>
<accession>Q9XZQ7</accession>
<name>TBPL1_CAEEL</name>
<reference evidence="9" key="1">
    <citation type="journal article" date="2000" name="Mol. Cell">
        <title>The TBP-like factor CeTLF is required to activate RNA polymerase II transcription during C. elegans embryogenesis.</title>
        <authorList>
            <person name="Kaltenbach L."/>
            <person name="Horner M.A."/>
            <person name="Rothman J.H."/>
            <person name="Mango S.E."/>
        </authorList>
    </citation>
    <scope>NUCLEOTIDE SEQUENCE [MRNA] (ISOFORM A)</scope>
    <scope>FUNCTION</scope>
    <scope>SUBCELLULAR LOCATION</scope>
    <scope>DEVELOPMENTAL STAGE</scope>
    <scope>DISRUPTION PHENOTYPE</scope>
</reference>
<reference evidence="11" key="2">
    <citation type="journal article" date="1998" name="Science">
        <title>Genome sequence of the nematode C. elegans: a platform for investigating biology.</title>
        <authorList>
            <consortium name="The C. elegans sequencing consortium"/>
        </authorList>
    </citation>
    <scope>NUCLEOTIDE SEQUENCE [LARGE SCALE GENOMIC DNA]</scope>
    <source>
        <strain evidence="11">Bristol N2</strain>
    </source>
</reference>
<reference evidence="10" key="3">
    <citation type="journal article" date="1999" name="Trends Biochem. Sci.">
        <title>The TBP-like factor: an alternative transcription factor in metazoa?</title>
        <authorList>
            <person name="Dantonel J.-C."/>
            <person name="Wurtz J.-M."/>
            <person name="Poch O."/>
            <person name="Moras D."/>
            <person name="Tora L."/>
        </authorList>
    </citation>
    <scope>NUCLEOTIDE SEQUENCE [MRNA] OF 1-457 (ISOFORM A)</scope>
</reference>
<reference evidence="8" key="4">
    <citation type="journal article" date="2000" name="Mol. Cell">
        <title>TBP-like factor is required for embryonic RNA polymerase II transcription in C. elegans.</title>
        <authorList>
            <person name="Dantonel J.C."/>
            <person name="Quintin S."/>
            <person name="Lakatos L."/>
            <person name="Labouesse M."/>
            <person name="Tora L."/>
        </authorList>
    </citation>
    <scope>FUNCTION</scope>
    <scope>SUBCELLULAR LOCATION</scope>
    <scope>DEVELOPMENTAL STAGE</scope>
    <scope>DISRUPTION PHENOTYPE</scope>
</reference>
<reference evidence="8" key="5">
    <citation type="journal article" date="2004" name="J. Biol. Chem.">
        <title>An extensive requirement for transcription factor IID-specific TAF-1 in Caenorhabditis elegans embryonic transcription.</title>
        <authorList>
            <person name="Walker A.K."/>
            <person name="Shi Y."/>
            <person name="Blackwell T.K."/>
        </authorList>
    </citation>
    <scope>FUNCTION</scope>
    <scope>SUBCELLULAR LOCATION</scope>
    <scope>DISRUPTION PHENOTYPE</scope>
</reference>
<feature type="chain" id="PRO_0000450699" description="TATA box-binding protein-like 1">
    <location>
        <begin position="1"/>
        <end position="508"/>
    </location>
</feature>
<feature type="region of interest" description="Disordered" evidence="2">
    <location>
        <begin position="145"/>
        <end position="190"/>
    </location>
</feature>
<feature type="region of interest" description="Disordered" evidence="2">
    <location>
        <begin position="236"/>
        <end position="262"/>
    </location>
</feature>
<feature type="region of interest" description="Disordered" evidence="2">
    <location>
        <begin position="456"/>
        <end position="479"/>
    </location>
</feature>
<feature type="splice variant" id="VSP_060675" description="In isoform a." evidence="8">
    <location>
        <begin position="13"/>
        <end position="15"/>
    </location>
</feature>
<sequence length="508" mass="57805">MQMGDHQMMGNQRYYRTYVQKVMPAQAGGAVSQNATYVQTAGIRTVHHDGNGQQRIVQLPPGVRQIQQNGVGPAYVRQVPGGQPMQVNFGHPGTIAGRNVAVGVQMRPVQGHNVQQGYQRQQVANQIQQQNRAVFMAQNQQGQQQISYAQAQHRQQQQNQQQHHQQPQHFNHPSQQNQMIMQHRQPQMHHNQQHQMVQPQMTRHQMAQHHAQQPHPQIYVPRDMNLAVPLREPSPEPIPVKIEVPDVPPEGTSAANEEPMPDDGDIDIQIRNVVCNYTLPLHIDLRKLAMNTHNVTYEREKGVMMKQKRSPGCYIKVYSSGKVYIVGCRSEADCKRAARSIARHVQRVMGKTKERVSIRNYRVNNVLATCRLPFGIKIEEVAAKYPSESTYEPELSVGLVWRSVTPKATLRIHTTGSITVTGAQSEADVLEVLSKIYPIVLEFRCLERAKGNVAAQKKRKRKAPVNRGPPIKRERFDDSNYRNSGVINNQVYFSDEDEDLYDELDLEE</sequence>